<protein>
    <recommendedName>
        <fullName evidence="1">Cytidylate kinase</fullName>
        <shortName evidence="1">CK</shortName>
        <ecNumber evidence="1">2.7.4.25</ecNumber>
    </recommendedName>
    <alternativeName>
        <fullName evidence="1">Cytidine monophosphate kinase</fullName>
        <shortName evidence="1">CMP kinase</shortName>
    </alternativeName>
</protein>
<proteinExistence type="inferred from homology"/>
<sequence>MTFVIAIDGPAAAGKGTLSRRIAEQYGFHHLDTGLTYRATAKALMDAGLPLDDEAVAEKTAREVDLSGLDRAVLSEHSIGEAASKIAVMPAVRRALVEAQRAFARKEPGTVLDGRDIGTVVCPDAAVKLYVTASPEVRAKRRHDEIVAGGGKADYTAIFEDVKKRDGRDMGRADSPLRPAEDAHLLDTSEMSIEAAFQAAKTLVDAALKEKI</sequence>
<name>KCY_RHIME</name>
<evidence type="ECO:0000255" key="1">
    <source>
        <dbReference type="HAMAP-Rule" id="MF_00238"/>
    </source>
</evidence>
<gene>
    <name evidence="1" type="primary">cmk</name>
    <name type="ordered locus">R00254</name>
    <name type="ORF">SMc00334</name>
</gene>
<comment type="catalytic activity">
    <reaction evidence="1">
        <text>CMP + ATP = CDP + ADP</text>
        <dbReference type="Rhea" id="RHEA:11600"/>
        <dbReference type="ChEBI" id="CHEBI:30616"/>
        <dbReference type="ChEBI" id="CHEBI:58069"/>
        <dbReference type="ChEBI" id="CHEBI:60377"/>
        <dbReference type="ChEBI" id="CHEBI:456216"/>
        <dbReference type="EC" id="2.7.4.25"/>
    </reaction>
</comment>
<comment type="catalytic activity">
    <reaction evidence="1">
        <text>dCMP + ATP = dCDP + ADP</text>
        <dbReference type="Rhea" id="RHEA:25094"/>
        <dbReference type="ChEBI" id="CHEBI:30616"/>
        <dbReference type="ChEBI" id="CHEBI:57566"/>
        <dbReference type="ChEBI" id="CHEBI:58593"/>
        <dbReference type="ChEBI" id="CHEBI:456216"/>
        <dbReference type="EC" id="2.7.4.25"/>
    </reaction>
</comment>
<comment type="subcellular location">
    <subcellularLocation>
        <location evidence="1">Cytoplasm</location>
    </subcellularLocation>
</comment>
<comment type="similarity">
    <text evidence="1">Belongs to the cytidylate kinase family. Type 1 subfamily.</text>
</comment>
<feature type="chain" id="PRO_0000131961" description="Cytidylate kinase">
    <location>
        <begin position="1"/>
        <end position="212"/>
    </location>
</feature>
<feature type="binding site" evidence="1">
    <location>
        <begin position="9"/>
        <end position="17"/>
    </location>
    <ligand>
        <name>ATP</name>
        <dbReference type="ChEBI" id="CHEBI:30616"/>
    </ligand>
</feature>
<accession>Q92SV4</accession>
<organism>
    <name type="scientific">Rhizobium meliloti (strain 1021)</name>
    <name type="common">Ensifer meliloti</name>
    <name type="synonym">Sinorhizobium meliloti</name>
    <dbReference type="NCBI Taxonomy" id="266834"/>
    <lineage>
        <taxon>Bacteria</taxon>
        <taxon>Pseudomonadati</taxon>
        <taxon>Pseudomonadota</taxon>
        <taxon>Alphaproteobacteria</taxon>
        <taxon>Hyphomicrobiales</taxon>
        <taxon>Rhizobiaceae</taxon>
        <taxon>Sinorhizobium/Ensifer group</taxon>
        <taxon>Sinorhizobium</taxon>
    </lineage>
</organism>
<reference key="1">
    <citation type="journal article" date="2001" name="Proc. Natl. Acad. Sci. U.S.A.">
        <title>Analysis of the chromosome sequence of the legume symbiont Sinorhizobium meliloti strain 1021.</title>
        <authorList>
            <person name="Capela D."/>
            <person name="Barloy-Hubler F."/>
            <person name="Gouzy J."/>
            <person name="Bothe G."/>
            <person name="Ampe F."/>
            <person name="Batut J."/>
            <person name="Boistard P."/>
            <person name="Becker A."/>
            <person name="Boutry M."/>
            <person name="Cadieu E."/>
            <person name="Dreano S."/>
            <person name="Gloux S."/>
            <person name="Godrie T."/>
            <person name="Goffeau A."/>
            <person name="Kahn D."/>
            <person name="Kiss E."/>
            <person name="Lelaure V."/>
            <person name="Masuy D."/>
            <person name="Pohl T."/>
            <person name="Portetelle D."/>
            <person name="Puehler A."/>
            <person name="Purnelle B."/>
            <person name="Ramsperger U."/>
            <person name="Renard C."/>
            <person name="Thebault P."/>
            <person name="Vandenbol M."/>
            <person name="Weidner S."/>
            <person name="Galibert F."/>
        </authorList>
    </citation>
    <scope>NUCLEOTIDE SEQUENCE [LARGE SCALE GENOMIC DNA]</scope>
    <source>
        <strain>1021</strain>
    </source>
</reference>
<reference key="2">
    <citation type="journal article" date="2001" name="Science">
        <title>The composite genome of the legume symbiont Sinorhizobium meliloti.</title>
        <authorList>
            <person name="Galibert F."/>
            <person name="Finan T.M."/>
            <person name="Long S.R."/>
            <person name="Puehler A."/>
            <person name="Abola P."/>
            <person name="Ampe F."/>
            <person name="Barloy-Hubler F."/>
            <person name="Barnett M.J."/>
            <person name="Becker A."/>
            <person name="Boistard P."/>
            <person name="Bothe G."/>
            <person name="Boutry M."/>
            <person name="Bowser L."/>
            <person name="Buhrmester J."/>
            <person name="Cadieu E."/>
            <person name="Capela D."/>
            <person name="Chain P."/>
            <person name="Cowie A."/>
            <person name="Davis R.W."/>
            <person name="Dreano S."/>
            <person name="Federspiel N.A."/>
            <person name="Fisher R.F."/>
            <person name="Gloux S."/>
            <person name="Godrie T."/>
            <person name="Goffeau A."/>
            <person name="Golding B."/>
            <person name="Gouzy J."/>
            <person name="Gurjal M."/>
            <person name="Hernandez-Lucas I."/>
            <person name="Hong A."/>
            <person name="Huizar L."/>
            <person name="Hyman R.W."/>
            <person name="Jones T."/>
            <person name="Kahn D."/>
            <person name="Kahn M.L."/>
            <person name="Kalman S."/>
            <person name="Keating D.H."/>
            <person name="Kiss E."/>
            <person name="Komp C."/>
            <person name="Lelaure V."/>
            <person name="Masuy D."/>
            <person name="Palm C."/>
            <person name="Peck M.C."/>
            <person name="Pohl T.M."/>
            <person name="Portetelle D."/>
            <person name="Purnelle B."/>
            <person name="Ramsperger U."/>
            <person name="Surzycki R."/>
            <person name="Thebault P."/>
            <person name="Vandenbol M."/>
            <person name="Vorhoelter F.J."/>
            <person name="Weidner S."/>
            <person name="Wells D.H."/>
            <person name="Wong K."/>
            <person name="Yeh K.-C."/>
            <person name="Batut J."/>
        </authorList>
    </citation>
    <scope>NUCLEOTIDE SEQUENCE [LARGE SCALE GENOMIC DNA]</scope>
    <source>
        <strain>1021</strain>
    </source>
</reference>
<keyword id="KW-0067">ATP-binding</keyword>
<keyword id="KW-0963">Cytoplasm</keyword>
<keyword id="KW-0418">Kinase</keyword>
<keyword id="KW-0547">Nucleotide-binding</keyword>
<keyword id="KW-1185">Reference proteome</keyword>
<keyword id="KW-0808">Transferase</keyword>
<dbReference type="EC" id="2.7.4.25" evidence="1"/>
<dbReference type="EMBL" id="AL591688">
    <property type="protein sequence ID" value="CAC41691.1"/>
    <property type="molecule type" value="Genomic_DNA"/>
</dbReference>
<dbReference type="RefSeq" id="NP_384360.1">
    <property type="nucleotide sequence ID" value="NC_003047.1"/>
</dbReference>
<dbReference type="RefSeq" id="WP_010968453.1">
    <property type="nucleotide sequence ID" value="NC_003047.1"/>
</dbReference>
<dbReference type="SMR" id="Q92SV4"/>
<dbReference type="EnsemblBacteria" id="CAC41691">
    <property type="protein sequence ID" value="CAC41691"/>
    <property type="gene ID" value="SMc00334"/>
</dbReference>
<dbReference type="GeneID" id="89574581"/>
<dbReference type="KEGG" id="sme:SMc00334"/>
<dbReference type="PATRIC" id="fig|266834.11.peg.1621"/>
<dbReference type="eggNOG" id="COG0283">
    <property type="taxonomic scope" value="Bacteria"/>
</dbReference>
<dbReference type="HOGENOM" id="CLU_079959_0_1_5"/>
<dbReference type="OrthoDB" id="9807434at2"/>
<dbReference type="Proteomes" id="UP000001976">
    <property type="component" value="Chromosome"/>
</dbReference>
<dbReference type="GO" id="GO:0005737">
    <property type="term" value="C:cytoplasm"/>
    <property type="evidence" value="ECO:0007669"/>
    <property type="project" value="UniProtKB-SubCell"/>
</dbReference>
<dbReference type="GO" id="GO:0005524">
    <property type="term" value="F:ATP binding"/>
    <property type="evidence" value="ECO:0007669"/>
    <property type="project" value="UniProtKB-UniRule"/>
</dbReference>
<dbReference type="GO" id="GO:0036430">
    <property type="term" value="F:CMP kinase activity"/>
    <property type="evidence" value="ECO:0007669"/>
    <property type="project" value="RHEA"/>
</dbReference>
<dbReference type="GO" id="GO:0036431">
    <property type="term" value="F:dCMP kinase activity"/>
    <property type="evidence" value="ECO:0007669"/>
    <property type="project" value="RHEA"/>
</dbReference>
<dbReference type="GO" id="GO:0006220">
    <property type="term" value="P:pyrimidine nucleotide metabolic process"/>
    <property type="evidence" value="ECO:0007669"/>
    <property type="project" value="UniProtKB-UniRule"/>
</dbReference>
<dbReference type="CDD" id="cd02020">
    <property type="entry name" value="CMPK"/>
    <property type="match status" value="1"/>
</dbReference>
<dbReference type="Gene3D" id="3.40.50.300">
    <property type="entry name" value="P-loop containing nucleotide triphosphate hydrolases"/>
    <property type="match status" value="1"/>
</dbReference>
<dbReference type="HAMAP" id="MF_00238">
    <property type="entry name" value="Cytidyl_kinase_type1"/>
    <property type="match status" value="1"/>
</dbReference>
<dbReference type="InterPro" id="IPR003136">
    <property type="entry name" value="Cytidylate_kin"/>
</dbReference>
<dbReference type="InterPro" id="IPR011994">
    <property type="entry name" value="Cytidylate_kinase_dom"/>
</dbReference>
<dbReference type="InterPro" id="IPR027417">
    <property type="entry name" value="P-loop_NTPase"/>
</dbReference>
<dbReference type="NCBIfam" id="TIGR00017">
    <property type="entry name" value="cmk"/>
    <property type="match status" value="1"/>
</dbReference>
<dbReference type="Pfam" id="PF02224">
    <property type="entry name" value="Cytidylate_kin"/>
    <property type="match status" value="1"/>
</dbReference>
<dbReference type="SUPFAM" id="SSF52540">
    <property type="entry name" value="P-loop containing nucleoside triphosphate hydrolases"/>
    <property type="match status" value="1"/>
</dbReference>